<sequence length="307" mass="33996">MKLWFSTLKLKKAAAVLLFSCVALAGCANNQTNASQPAEKNEKTEMKDDFAKLEEQFDAKLGIFALDTGTNRTVAYRPDERFAFASTIKALTVGVLLQQKSIEDLNQRITYTRDDLVNYNPITEKHVDTGMTLKELADASLRYSDNAAQNLILKQIGGPESLKKELRKIGDEVTNPERFEPELNEVNPGETQDTSTARALVTSLRAFALEDKLPSEKRELLIDWMKRNTTGDALIRAGVPDGWEVADKTGAASYGTRNDIAIIWPPKGDPVVLAVLSSRDKKDAKYDDKLIAEATKVVMKALNMNGK</sequence>
<keyword id="KW-0002">3D-structure</keyword>
<keyword id="KW-0046">Antibiotic resistance</keyword>
<keyword id="KW-1003">Cell membrane</keyword>
<keyword id="KW-0903">Direct protein sequencing</keyword>
<keyword id="KW-0378">Hydrolase</keyword>
<keyword id="KW-0449">Lipoprotein</keyword>
<keyword id="KW-0472">Membrane</keyword>
<keyword id="KW-0564">Palmitate</keyword>
<keyword id="KW-0732">Signal</keyword>
<accession>P00808</accession>
<protein>
    <recommendedName>
        <fullName>Beta-lactamase</fullName>
        <ecNumber>3.5.2.6</ecNumber>
    </recommendedName>
    <alternativeName>
        <fullName>Penicillinase</fullName>
    </alternativeName>
    <component>
        <recommendedName>
            <fullName>Large exopenicillinase</fullName>
        </recommendedName>
    </component>
    <component>
        <recommendedName>
            <fullName>Small exopenicillinase</fullName>
        </recommendedName>
    </component>
</protein>
<feature type="signal peptide">
    <location>
        <begin position="1"/>
        <end position="26"/>
    </location>
</feature>
<feature type="chain" id="PRO_0000016973" description="Large exopenicillinase">
    <location>
        <begin position="27"/>
        <end position="307"/>
    </location>
</feature>
<feature type="chain" id="PRO_0000016974" description="Small exopenicillinase">
    <location>
        <begin position="43"/>
        <end position="307"/>
    </location>
</feature>
<feature type="active site" description="Acyl-ester intermediate">
    <location>
        <position position="86"/>
    </location>
</feature>
<feature type="active site" description="Proton acceptor">
    <location>
        <position position="182"/>
    </location>
</feature>
<feature type="binding site">
    <location>
        <begin position="248"/>
        <end position="250"/>
    </location>
    <ligand>
        <name>substrate</name>
    </ligand>
</feature>
<feature type="lipid moiety-binding region" description="N-palmitoyl cysteine" evidence="1">
    <location>
        <position position="27"/>
    </location>
</feature>
<feature type="lipid moiety-binding region" description="S-diacylglycerol cysteine" evidence="1">
    <location>
        <position position="27"/>
    </location>
</feature>
<feature type="helix" evidence="7">
    <location>
        <begin position="50"/>
        <end position="57"/>
    </location>
</feature>
<feature type="strand" evidence="7">
    <location>
        <begin position="60"/>
        <end position="67"/>
    </location>
</feature>
<feature type="turn" evidence="7">
    <location>
        <begin position="68"/>
        <end position="70"/>
    </location>
</feature>
<feature type="strand" evidence="7">
    <location>
        <begin position="73"/>
        <end position="77"/>
    </location>
</feature>
<feature type="strand" evidence="7">
    <location>
        <begin position="81"/>
        <end position="83"/>
    </location>
</feature>
<feature type="helix" evidence="7">
    <location>
        <begin position="85"/>
        <end position="87"/>
    </location>
</feature>
<feature type="helix" evidence="7">
    <location>
        <begin position="88"/>
        <end position="99"/>
    </location>
</feature>
<feature type="helix" evidence="7">
    <location>
        <begin position="103"/>
        <end position="106"/>
    </location>
</feature>
<feature type="strand" evidence="6">
    <location>
        <begin position="108"/>
        <end position="110"/>
    </location>
</feature>
<feature type="helix" evidence="7">
    <location>
        <begin position="113"/>
        <end position="115"/>
    </location>
</feature>
<feature type="helix" evidence="7">
    <location>
        <begin position="123"/>
        <end position="125"/>
    </location>
</feature>
<feature type="turn" evidence="7">
    <location>
        <begin position="127"/>
        <end position="129"/>
    </location>
</feature>
<feature type="helix" evidence="7">
    <location>
        <begin position="133"/>
        <end position="143"/>
    </location>
</feature>
<feature type="helix" evidence="7">
    <location>
        <begin position="146"/>
        <end position="155"/>
    </location>
</feature>
<feature type="helix" evidence="7">
    <location>
        <begin position="159"/>
        <end position="168"/>
    </location>
</feature>
<feature type="strand" evidence="5">
    <location>
        <begin position="178"/>
        <end position="180"/>
    </location>
</feature>
<feature type="helix" evidence="7">
    <location>
        <begin position="182"/>
        <end position="184"/>
    </location>
</feature>
<feature type="strand" evidence="7">
    <location>
        <begin position="194"/>
        <end position="196"/>
    </location>
</feature>
<feature type="helix" evidence="7">
    <location>
        <begin position="197"/>
        <end position="208"/>
    </location>
</feature>
<feature type="strand" evidence="7">
    <location>
        <begin position="210"/>
        <end position="213"/>
    </location>
</feature>
<feature type="helix" evidence="7">
    <location>
        <begin position="215"/>
        <end position="226"/>
    </location>
</feature>
<feature type="turn" evidence="7">
    <location>
        <begin position="232"/>
        <end position="234"/>
    </location>
</feature>
<feature type="helix" evidence="7">
    <location>
        <begin position="235"/>
        <end position="238"/>
    </location>
</feature>
<feature type="strand" evidence="7">
    <location>
        <begin position="243"/>
        <end position="252"/>
    </location>
</feature>
<feature type="turn" evidence="7">
    <location>
        <begin position="253"/>
        <end position="255"/>
    </location>
</feature>
<feature type="strand" evidence="7">
    <location>
        <begin position="256"/>
        <end position="264"/>
    </location>
</feature>
<feature type="strand" evidence="7">
    <location>
        <begin position="266"/>
        <end position="268"/>
    </location>
</feature>
<feature type="strand" evidence="7">
    <location>
        <begin position="271"/>
        <end position="278"/>
    </location>
</feature>
<feature type="helix" evidence="7">
    <location>
        <begin position="288"/>
        <end position="301"/>
    </location>
</feature>
<organism>
    <name type="scientific">Bacillus licheniformis</name>
    <dbReference type="NCBI Taxonomy" id="1402"/>
    <lineage>
        <taxon>Bacteria</taxon>
        <taxon>Bacillati</taxon>
        <taxon>Bacillota</taxon>
        <taxon>Bacilli</taxon>
        <taxon>Bacillales</taxon>
        <taxon>Bacillaceae</taxon>
        <taxon>Bacillus</taxon>
    </lineage>
</organism>
<proteinExistence type="evidence at protein level"/>
<reference key="1">
    <citation type="journal article" date="1981" name="Nucleic Acids Res.">
        <title>Penicillinase from Bacillus licheniformis: nucleotide sequence of the gene and implications for the biosynthesis of a secretory protein in a Gram-positive bacterium.</title>
        <authorList>
            <person name="Neugebauer K."/>
            <person name="Sprengel R."/>
            <person name="Schaller H."/>
        </authorList>
    </citation>
    <scope>NUCLEOTIDE SEQUENCE [GENOMIC DNA]</scope>
    <source>
        <strain>ATCC 25972 / DSM 8782 / NCIMB 11109 / IMET 10723 / 749/C</strain>
    </source>
</reference>
<reference key="2">
    <citation type="journal article" date="1981" name="Gene">
        <title>The promoter-proximal region of the Bacillus licheniformis penicillinase gene: nucleotide sequence and predicted leader peptide sequence.</title>
        <authorList>
            <person name="Kroyer J."/>
            <person name="Chang S."/>
        </authorList>
    </citation>
    <scope>NUCLEOTIDE SEQUENCE [GENOMIC DNA] OF 1-72</scope>
    <source>
        <strain>ATCC 25972 / DSM 8782 / NCIMB 11109 / IMET 10723 / 749/C</strain>
    </source>
</reference>
<reference key="3">
    <citation type="journal article" date="1969" name="Biochem. J.">
        <title>The amino acid sequence of penicillinase from Bacillus licheniformis.</title>
        <authorList>
            <person name="Meadway R.J."/>
        </authorList>
    </citation>
    <scope>PROTEIN SEQUENCE OF 43-307</scope>
</reference>
<reference key="4">
    <citation type="journal article" date="1988" name="J. Bacteriol.">
        <title>Regulation of the penicillinase genes of Bacillus licheniformis: interaction of the pen repressor with its operators.</title>
        <authorList>
            <person name="Wittman V."/>
            <person name="Wong H.C."/>
        </authorList>
    </citation>
    <scope>NUCLEOTIDE SEQUENCE [GENOMIC DNA] OF 1-15</scope>
    <source>
        <strain>ATCC 25972 / DSM 8782 / NCIMB 11109 / IMET 10723 / 749/C</strain>
    </source>
</reference>
<reference key="5">
    <citation type="journal article" date="1980" name="Biochemistry">
        <title>Large exopenicillinase, initial extracellular form detected in cultures of Bacillus licheniformis.</title>
        <authorList>
            <person name="Izui K."/>
            <person name="Nielsen J.B.K."/>
            <person name="Caulfield M.P."/>
            <person name="Lampen J.O."/>
        </authorList>
    </citation>
    <scope>CONFIRMATION OF THE AMINO ENDS OF THE LARGE AND SMALL EXOPENICILLINASE</scope>
</reference>
<reference key="6">
    <citation type="journal article" date="1991" name="Biochem. J.">
        <title>A standard numbering scheme for the class A beta-lactamases.</title>
        <authorList>
            <person name="Ambler R.P."/>
            <person name="Coulson A.F."/>
            <person name="Frere J.M."/>
            <person name="Ghuysen J.M."/>
            <person name="Joris B."/>
            <person name="Forsman M."/>
            <person name="Levesque R.C."/>
            <person name="Tiraby G."/>
            <person name="Waley S.G."/>
        </authorList>
    </citation>
    <scope>AMINO ACID NUMBERING SCHEME</scope>
</reference>
<reference key="7">
    <citation type="journal article" date="1990" name="Proteins">
        <title>Beta-lactamase of Bacillus licheniformis 749/C at 2-A resolution.</title>
        <authorList>
            <person name="Moews P.C."/>
            <person name="Knox J.R."/>
            <person name="Dideberg O."/>
            <person name="Charlier P."/>
            <person name="Frere J.-M."/>
        </authorList>
    </citation>
    <scope>X-RAY CRYSTALLOGRAPHY (2.0 ANGSTROMS)</scope>
</reference>
<reference key="8">
    <citation type="journal article" date="1991" name="J. Mol. Biol.">
        <title>Beta-lactamase of Bacillus licheniformis 749/C. Refinement at 2-A resolution and analysis of hydration.</title>
        <authorList>
            <person name="Knox J.R."/>
            <person name="Moews P.C."/>
        </authorList>
    </citation>
    <scope>X-RAY CRYSTALLOGRAPHY (2.0 ANGSTROMS)</scope>
</reference>
<reference key="9">
    <citation type="journal article" date="2002" name="Biochemistry">
        <title>Crystal structures of the Bacillus licheniformis BS3 class A beta-lactamase and of the acyl-enzyme adduct formed with cefoxitin.</title>
        <authorList>
            <person name="Fonze E."/>
            <person name="Vanhove M."/>
            <person name="Dive G."/>
            <person name="Sauvage E."/>
            <person name="Frere J.-M."/>
            <person name="Charlier P."/>
        </authorList>
    </citation>
    <scope>X-RAY CRYSTALLOGRAPHY (1.7 ANGSTROMS)</scope>
</reference>
<gene>
    <name type="primary">penP</name>
    <name type="synonym">blaP</name>
</gene>
<evidence type="ECO:0000255" key="1">
    <source>
        <dbReference type="PROSITE-ProRule" id="PRU00303"/>
    </source>
</evidence>
<evidence type="ECO:0000255" key="2">
    <source>
        <dbReference type="PROSITE-ProRule" id="PRU10101"/>
    </source>
</evidence>
<evidence type="ECO:0000305" key="3"/>
<evidence type="ECO:0000305" key="4">
    <source>
    </source>
</evidence>
<evidence type="ECO:0007829" key="5">
    <source>
        <dbReference type="PDB" id="3SH8"/>
    </source>
</evidence>
<evidence type="ECO:0007829" key="6">
    <source>
        <dbReference type="PDB" id="4M3K"/>
    </source>
</evidence>
<evidence type="ECO:0007829" key="7">
    <source>
        <dbReference type="PDB" id="5GHX"/>
    </source>
</evidence>
<name>BLAC_BACLI</name>
<comment type="catalytic activity">
    <reaction evidence="2">
        <text>a beta-lactam + H2O = a substituted beta-amino acid</text>
        <dbReference type="Rhea" id="RHEA:20401"/>
        <dbReference type="ChEBI" id="CHEBI:15377"/>
        <dbReference type="ChEBI" id="CHEBI:35627"/>
        <dbReference type="ChEBI" id="CHEBI:140347"/>
        <dbReference type="EC" id="3.5.2.6"/>
    </reaction>
</comment>
<comment type="subcellular location">
    <subcellularLocation>
        <location evidence="3">Cell membrane</location>
        <topology evidence="3">Lipid-anchor</topology>
    </subcellularLocation>
</comment>
<comment type="induction">
    <text>By the bacillus licheniformis protein BlaR1.</text>
</comment>
<comment type="PTM">
    <text>Large exopenicillinase is the primary secretion product; it can be converted to small exopenicillinase.</text>
</comment>
<comment type="miscellaneous">
    <text evidence="4">The class A beta-lactamase family has a specific amino-acid numbering system, sometimes called Ambler or ABL numbering and often misspelt as Amber. A multiple sequence alignment was used to derive a consensus sequence and then the consensus was numbered taking into account insertions and deletions. This allows use of identical numbers, e.g. for active site residues, despite differences in protein length. UniProt always uses natural numbering of residues, hence there appear to be differences in numbering between this entry and some papers.</text>
</comment>
<comment type="similarity">
    <text evidence="3">Belongs to the class-A beta-lactamase family.</text>
</comment>
<dbReference type="EC" id="3.5.2.6"/>
<dbReference type="EMBL" id="V00093">
    <property type="protein sequence ID" value="CAA23431.1"/>
    <property type="molecule type" value="Genomic_DNA"/>
</dbReference>
<dbReference type="EMBL" id="M21337">
    <property type="protein sequence ID" value="AAA22649.2"/>
    <property type="molecule type" value="Genomic_DNA"/>
</dbReference>
<dbReference type="PIR" id="A93727">
    <property type="entry name" value="PNBSL"/>
</dbReference>
<dbReference type="RefSeq" id="WP_023857755.1">
    <property type="nucleotide sequence ID" value="NG_051161.1"/>
</dbReference>
<dbReference type="PDB" id="1I2S">
    <property type="method" value="X-ray"/>
    <property type="resolution" value="1.70 A"/>
    <property type="chains" value="A/B=26-307"/>
</dbReference>
<dbReference type="PDB" id="1I2W">
    <property type="method" value="X-ray"/>
    <property type="resolution" value="1.70 A"/>
    <property type="chains" value="A/B=26-307"/>
</dbReference>
<dbReference type="PDB" id="1MBL">
    <property type="method" value="X-ray"/>
    <property type="resolution" value="2.00 A"/>
    <property type="chains" value="A/B=48-303"/>
</dbReference>
<dbReference type="PDB" id="1W7F">
    <property type="method" value="X-ray"/>
    <property type="resolution" value="1.80 A"/>
    <property type="chains" value="A/B=1-307"/>
</dbReference>
<dbReference type="PDB" id="2BLM">
    <property type="method" value="X-ray"/>
    <property type="resolution" value="2.00 A"/>
    <property type="chains" value="A/B=43-307"/>
</dbReference>
<dbReference type="PDB" id="2WK0">
    <property type="method" value="X-ray"/>
    <property type="resolution" value="1.65 A"/>
    <property type="chains" value="A/B=43-307"/>
</dbReference>
<dbReference type="PDB" id="2Y91">
    <property type="method" value="X-ray"/>
    <property type="resolution" value="2.00 A"/>
    <property type="chains" value="A/B=43-307"/>
</dbReference>
<dbReference type="PDB" id="3B3X">
    <property type="method" value="X-ray"/>
    <property type="resolution" value="2.50 A"/>
    <property type="chains" value="A/B=43-307"/>
</dbReference>
<dbReference type="PDB" id="3LY3">
    <property type="method" value="X-ray"/>
    <property type="resolution" value="1.80 A"/>
    <property type="chains" value="A=47-305"/>
</dbReference>
<dbReference type="PDB" id="3LY4">
    <property type="method" value="X-ray"/>
    <property type="resolution" value="1.80 A"/>
    <property type="chains" value="A=47-303"/>
</dbReference>
<dbReference type="PDB" id="3M2J">
    <property type="method" value="X-ray"/>
    <property type="resolution" value="1.80 A"/>
    <property type="chains" value="A/B=47-303"/>
</dbReference>
<dbReference type="PDB" id="3M2K">
    <property type="method" value="X-ray"/>
    <property type="resolution" value="3.50 A"/>
    <property type="chains" value="A/B=47-303"/>
</dbReference>
<dbReference type="PDB" id="3SH7">
    <property type="method" value="X-ray"/>
    <property type="resolution" value="2.50 A"/>
    <property type="chains" value="A/B=43-307"/>
</dbReference>
<dbReference type="PDB" id="3SH8">
    <property type="method" value="X-ray"/>
    <property type="resolution" value="2.00 A"/>
    <property type="chains" value="A/B=43-307"/>
</dbReference>
<dbReference type="PDB" id="3SH9">
    <property type="method" value="X-ray"/>
    <property type="resolution" value="1.90 A"/>
    <property type="chains" value="A/B=43-307"/>
</dbReference>
<dbReference type="PDB" id="3SOI">
    <property type="method" value="X-ray"/>
    <property type="resolution" value="1.73 A"/>
    <property type="chains" value="A/B=46-303"/>
</dbReference>
<dbReference type="PDB" id="4BLM">
    <property type="method" value="X-ray"/>
    <property type="resolution" value="2.00 A"/>
    <property type="chains" value="A/B=43-307"/>
</dbReference>
<dbReference type="PDB" id="4M3K">
    <property type="method" value="X-ray"/>
    <property type="resolution" value="1.48 A"/>
    <property type="chains" value="A=44-307"/>
</dbReference>
<dbReference type="PDB" id="4N1H">
    <property type="method" value="X-ray"/>
    <property type="resolution" value="3.00 A"/>
    <property type="chains" value="A/C=44-307"/>
</dbReference>
<dbReference type="PDB" id="4N92">
    <property type="method" value="X-ray"/>
    <property type="resolution" value="1.93 A"/>
    <property type="chains" value="A/B=43-307"/>
</dbReference>
<dbReference type="PDB" id="4N9K">
    <property type="method" value="X-ray"/>
    <property type="resolution" value="1.93 A"/>
    <property type="chains" value="A/B=43-307"/>
</dbReference>
<dbReference type="PDB" id="4N9L">
    <property type="method" value="X-ray"/>
    <property type="resolution" value="2.30 A"/>
    <property type="chains" value="A/B=43-307"/>
</dbReference>
<dbReference type="PDB" id="5GHX">
    <property type="method" value="X-ray"/>
    <property type="resolution" value="1.24 A"/>
    <property type="chains" value="A/B=43-307"/>
</dbReference>
<dbReference type="PDB" id="5GHY">
    <property type="method" value="X-ray"/>
    <property type="resolution" value="2.10 A"/>
    <property type="chains" value="A/B=43-307"/>
</dbReference>
<dbReference type="PDB" id="5GHZ">
    <property type="method" value="X-ray"/>
    <property type="resolution" value="1.93 A"/>
    <property type="chains" value="A/B=43-307"/>
</dbReference>
<dbReference type="PDB" id="5LWF">
    <property type="method" value="X-ray"/>
    <property type="resolution" value="2.56 A"/>
    <property type="chains" value="A/B=44-307"/>
</dbReference>
<dbReference type="PDB" id="5ZFL">
    <property type="method" value="X-ray"/>
    <property type="resolution" value="1.50 A"/>
    <property type="chains" value="A/B=43-307"/>
</dbReference>
<dbReference type="PDB" id="5ZFT">
    <property type="method" value="X-ray"/>
    <property type="resolution" value="1.93 A"/>
    <property type="chains" value="A/B=43-307"/>
</dbReference>
<dbReference type="PDB" id="5ZG6">
    <property type="method" value="X-ray"/>
    <property type="resolution" value="2.00 A"/>
    <property type="chains" value="A/B=43-307"/>
</dbReference>
<dbReference type="PDBsum" id="1I2S"/>
<dbReference type="PDBsum" id="1I2W"/>
<dbReference type="PDBsum" id="1MBL"/>
<dbReference type="PDBsum" id="1W7F"/>
<dbReference type="PDBsum" id="2BLM"/>
<dbReference type="PDBsum" id="2WK0"/>
<dbReference type="PDBsum" id="2Y91"/>
<dbReference type="PDBsum" id="3B3X"/>
<dbReference type="PDBsum" id="3LY3"/>
<dbReference type="PDBsum" id="3LY4"/>
<dbReference type="PDBsum" id="3M2J"/>
<dbReference type="PDBsum" id="3M2K"/>
<dbReference type="PDBsum" id="3SH7"/>
<dbReference type="PDBsum" id="3SH8"/>
<dbReference type="PDBsum" id="3SH9"/>
<dbReference type="PDBsum" id="3SOI"/>
<dbReference type="PDBsum" id="4BLM"/>
<dbReference type="PDBsum" id="4M3K"/>
<dbReference type="PDBsum" id="4N1H"/>
<dbReference type="PDBsum" id="4N92"/>
<dbReference type="PDBsum" id="4N9K"/>
<dbReference type="PDBsum" id="4N9L"/>
<dbReference type="PDBsum" id="5GHX"/>
<dbReference type="PDBsum" id="5GHY"/>
<dbReference type="PDBsum" id="5GHZ"/>
<dbReference type="PDBsum" id="5LWF"/>
<dbReference type="PDBsum" id="5ZFL"/>
<dbReference type="PDBsum" id="5ZFT"/>
<dbReference type="PDBsum" id="5ZG6"/>
<dbReference type="BMRB" id="P00808"/>
<dbReference type="SMR" id="P00808"/>
<dbReference type="BindingDB" id="P00808"/>
<dbReference type="ChEMBL" id="CHEMBL5633"/>
<dbReference type="DrugBank" id="DB04261">
    <property type="generic name" value="Carbamic Acid"/>
</dbReference>
<dbReference type="DrugBank" id="DB01331">
    <property type="generic name" value="Cefoxitin"/>
</dbReference>
<dbReference type="DrugBank" id="DB04272">
    <property type="generic name" value="Citric acid"/>
</dbReference>
<dbReference type="DrugCentral" id="P00808"/>
<dbReference type="ABCD" id="P00808">
    <property type="antibodies" value="3 sequenced antibodies"/>
</dbReference>
<dbReference type="GeneID" id="56670005"/>
<dbReference type="BRENDA" id="3.5.2.6">
    <property type="organism ID" value="669"/>
</dbReference>
<dbReference type="SABIO-RK" id="P00808"/>
<dbReference type="EvolutionaryTrace" id="P00808"/>
<dbReference type="GO" id="GO:0005886">
    <property type="term" value="C:plasma membrane"/>
    <property type="evidence" value="ECO:0007669"/>
    <property type="project" value="UniProtKB-SubCell"/>
</dbReference>
<dbReference type="GO" id="GO:0008800">
    <property type="term" value="F:beta-lactamase activity"/>
    <property type="evidence" value="ECO:0007669"/>
    <property type="project" value="UniProtKB-EC"/>
</dbReference>
<dbReference type="GO" id="GO:0030655">
    <property type="term" value="P:beta-lactam antibiotic catabolic process"/>
    <property type="evidence" value="ECO:0007669"/>
    <property type="project" value="InterPro"/>
</dbReference>
<dbReference type="GO" id="GO:0046677">
    <property type="term" value="P:response to antibiotic"/>
    <property type="evidence" value="ECO:0007669"/>
    <property type="project" value="UniProtKB-KW"/>
</dbReference>
<dbReference type="Gene3D" id="3.40.710.10">
    <property type="entry name" value="DD-peptidase/beta-lactamase superfamily"/>
    <property type="match status" value="1"/>
</dbReference>
<dbReference type="InterPro" id="IPR012338">
    <property type="entry name" value="Beta-lactam/transpept-like"/>
</dbReference>
<dbReference type="InterPro" id="IPR045155">
    <property type="entry name" value="Beta-lactam_cat"/>
</dbReference>
<dbReference type="InterPro" id="IPR000871">
    <property type="entry name" value="Beta-lactam_class-A"/>
</dbReference>
<dbReference type="InterPro" id="IPR023650">
    <property type="entry name" value="Beta-lactam_class-A_AS"/>
</dbReference>
<dbReference type="NCBIfam" id="NF033103">
    <property type="entry name" value="bla_class_A"/>
    <property type="match status" value="1"/>
</dbReference>
<dbReference type="NCBIfam" id="NF012156">
    <property type="entry name" value="blaP"/>
    <property type="match status" value="1"/>
</dbReference>
<dbReference type="NCBIfam" id="NF012167">
    <property type="entry name" value="classA_firm"/>
    <property type="match status" value="1"/>
</dbReference>
<dbReference type="PANTHER" id="PTHR35333">
    <property type="entry name" value="BETA-LACTAMASE"/>
    <property type="match status" value="1"/>
</dbReference>
<dbReference type="PANTHER" id="PTHR35333:SF3">
    <property type="entry name" value="BETA-LACTAMASE-TYPE TRANSPEPTIDASE FOLD CONTAINING PROTEIN"/>
    <property type="match status" value="1"/>
</dbReference>
<dbReference type="Pfam" id="PF13354">
    <property type="entry name" value="Beta-lactamase2"/>
    <property type="match status" value="1"/>
</dbReference>
<dbReference type="PRINTS" id="PR00118">
    <property type="entry name" value="BLACTAMASEA"/>
</dbReference>
<dbReference type="SUPFAM" id="SSF56601">
    <property type="entry name" value="beta-lactamase/transpeptidase-like"/>
    <property type="match status" value="1"/>
</dbReference>
<dbReference type="PROSITE" id="PS00146">
    <property type="entry name" value="BETA_LACTAMASE_A"/>
    <property type="match status" value="1"/>
</dbReference>
<dbReference type="PROSITE" id="PS51257">
    <property type="entry name" value="PROKAR_LIPOPROTEIN"/>
    <property type="match status" value="1"/>
</dbReference>